<organism>
    <name type="scientific">Cereibacter sphaeroides (strain ATCC 17025 / ATH 2.4.3)</name>
    <name type="common">Rhodobacter sphaeroides</name>
    <dbReference type="NCBI Taxonomy" id="349102"/>
    <lineage>
        <taxon>Bacteria</taxon>
        <taxon>Pseudomonadati</taxon>
        <taxon>Pseudomonadota</taxon>
        <taxon>Alphaproteobacteria</taxon>
        <taxon>Rhodobacterales</taxon>
        <taxon>Paracoccaceae</taxon>
        <taxon>Cereibacter</taxon>
    </lineage>
</organism>
<reference key="1">
    <citation type="submission" date="2007-04" db="EMBL/GenBank/DDBJ databases">
        <title>Complete sequence of chromosome of Rhodobacter sphaeroides ATCC 17025.</title>
        <authorList>
            <consortium name="US DOE Joint Genome Institute"/>
            <person name="Copeland A."/>
            <person name="Lucas S."/>
            <person name="Lapidus A."/>
            <person name="Barry K."/>
            <person name="Detter J.C."/>
            <person name="Glavina del Rio T."/>
            <person name="Hammon N."/>
            <person name="Israni S."/>
            <person name="Dalin E."/>
            <person name="Tice H."/>
            <person name="Pitluck S."/>
            <person name="Chertkov O."/>
            <person name="Brettin T."/>
            <person name="Bruce D."/>
            <person name="Han C."/>
            <person name="Schmutz J."/>
            <person name="Larimer F."/>
            <person name="Land M."/>
            <person name="Hauser L."/>
            <person name="Kyrpides N."/>
            <person name="Kim E."/>
            <person name="Richardson P."/>
            <person name="Mackenzie C."/>
            <person name="Choudhary M."/>
            <person name="Donohue T.J."/>
            <person name="Kaplan S."/>
        </authorList>
    </citation>
    <scope>NUCLEOTIDE SEQUENCE [LARGE SCALE GENOMIC DNA]</scope>
    <source>
        <strain>ATCC 17025 / ATH 2.4.3</strain>
    </source>
</reference>
<dbReference type="EMBL" id="CP000661">
    <property type="protein sequence ID" value="ABP71998.1"/>
    <property type="molecule type" value="Genomic_DNA"/>
</dbReference>
<dbReference type="SMR" id="A4WX84"/>
<dbReference type="STRING" id="349102.Rsph17025_3114"/>
<dbReference type="KEGG" id="rsq:Rsph17025_3114"/>
<dbReference type="eggNOG" id="COG0227">
    <property type="taxonomic scope" value="Bacteria"/>
</dbReference>
<dbReference type="HOGENOM" id="CLU_064548_4_2_5"/>
<dbReference type="BioCyc" id="RSPH349102:G1G8M-3217-MONOMER"/>
<dbReference type="GO" id="GO:0022625">
    <property type="term" value="C:cytosolic large ribosomal subunit"/>
    <property type="evidence" value="ECO:0007669"/>
    <property type="project" value="TreeGrafter"/>
</dbReference>
<dbReference type="GO" id="GO:0003735">
    <property type="term" value="F:structural constituent of ribosome"/>
    <property type="evidence" value="ECO:0007669"/>
    <property type="project" value="InterPro"/>
</dbReference>
<dbReference type="GO" id="GO:0006412">
    <property type="term" value="P:translation"/>
    <property type="evidence" value="ECO:0007669"/>
    <property type="project" value="UniProtKB-UniRule"/>
</dbReference>
<dbReference type="Gene3D" id="2.30.170.40">
    <property type="entry name" value="Ribosomal protein L28/L24"/>
    <property type="match status" value="1"/>
</dbReference>
<dbReference type="HAMAP" id="MF_00373">
    <property type="entry name" value="Ribosomal_bL28"/>
    <property type="match status" value="1"/>
</dbReference>
<dbReference type="InterPro" id="IPR026569">
    <property type="entry name" value="Ribosomal_bL28"/>
</dbReference>
<dbReference type="InterPro" id="IPR034704">
    <property type="entry name" value="Ribosomal_bL28/bL31-like_sf"/>
</dbReference>
<dbReference type="InterPro" id="IPR001383">
    <property type="entry name" value="Ribosomal_bL28_bact-type"/>
</dbReference>
<dbReference type="InterPro" id="IPR037147">
    <property type="entry name" value="Ribosomal_bL28_sf"/>
</dbReference>
<dbReference type="NCBIfam" id="TIGR00009">
    <property type="entry name" value="L28"/>
    <property type="match status" value="1"/>
</dbReference>
<dbReference type="PANTHER" id="PTHR13528">
    <property type="entry name" value="39S RIBOSOMAL PROTEIN L28, MITOCHONDRIAL"/>
    <property type="match status" value="1"/>
</dbReference>
<dbReference type="PANTHER" id="PTHR13528:SF2">
    <property type="entry name" value="LARGE RIBOSOMAL SUBUNIT PROTEIN BL28M"/>
    <property type="match status" value="1"/>
</dbReference>
<dbReference type="Pfam" id="PF00830">
    <property type="entry name" value="Ribosomal_L28"/>
    <property type="match status" value="1"/>
</dbReference>
<dbReference type="SUPFAM" id="SSF143800">
    <property type="entry name" value="L28p-like"/>
    <property type="match status" value="1"/>
</dbReference>
<protein>
    <recommendedName>
        <fullName evidence="1">Large ribosomal subunit protein bL28</fullName>
    </recommendedName>
    <alternativeName>
        <fullName evidence="3">50S ribosomal protein L28</fullName>
    </alternativeName>
</protein>
<sequence length="96" mass="10461">MSRVCELSGKAPMTGNTVSHANNKSRRRFLPNLNDVTLISDVLGQSFKLRISAAALRTVDHRGGLDAFLAKARDEELSLKALAIKKEIEKVRATAA</sequence>
<gene>
    <name evidence="1" type="primary">rpmB</name>
    <name type="ordered locus">Rsph17025_3114</name>
</gene>
<feature type="chain" id="PRO_1000007335" description="Large ribosomal subunit protein bL28">
    <location>
        <begin position="1"/>
        <end position="96"/>
    </location>
</feature>
<feature type="region of interest" description="Disordered" evidence="2">
    <location>
        <begin position="1"/>
        <end position="23"/>
    </location>
</feature>
<comment type="similarity">
    <text evidence="1">Belongs to the bacterial ribosomal protein bL28 family.</text>
</comment>
<evidence type="ECO:0000255" key="1">
    <source>
        <dbReference type="HAMAP-Rule" id="MF_00373"/>
    </source>
</evidence>
<evidence type="ECO:0000256" key="2">
    <source>
        <dbReference type="SAM" id="MobiDB-lite"/>
    </source>
</evidence>
<evidence type="ECO:0000305" key="3"/>
<proteinExistence type="inferred from homology"/>
<accession>A4WX84</accession>
<keyword id="KW-0687">Ribonucleoprotein</keyword>
<keyword id="KW-0689">Ribosomal protein</keyword>
<name>RL28_CERS5</name>